<protein>
    <recommendedName>
        <fullName>G-protein coupled receptor 1</fullName>
    </recommendedName>
</protein>
<dbReference type="EMBL" id="Y11278">
    <property type="protein sequence ID" value="CAA72145.1"/>
    <property type="molecule type" value="mRNA"/>
</dbReference>
<dbReference type="EMBL" id="U95142">
    <property type="protein sequence ID" value="AAC49961.1"/>
    <property type="molecule type" value="Genomic_DNA"/>
</dbReference>
<dbReference type="EMBL" id="U95143">
    <property type="protein sequence ID" value="AAC49962.1"/>
    <property type="molecule type" value="mRNA"/>
</dbReference>
<dbReference type="EMBL" id="AC007932">
    <property type="protein sequence ID" value="AAD49769.1"/>
    <property type="molecule type" value="Genomic_DNA"/>
</dbReference>
<dbReference type="EMBL" id="CP002684">
    <property type="protein sequence ID" value="AEE32270.1"/>
    <property type="molecule type" value="Genomic_DNA"/>
</dbReference>
<dbReference type="EMBL" id="CP002684">
    <property type="protein sequence ID" value="ANM59445.1"/>
    <property type="molecule type" value="Genomic_DNA"/>
</dbReference>
<dbReference type="EMBL" id="AY099871">
    <property type="protein sequence ID" value="AAM20722.1"/>
    <property type="molecule type" value="mRNA"/>
</dbReference>
<dbReference type="EMBL" id="BT000314">
    <property type="protein sequence ID" value="AAN15633.1"/>
    <property type="molecule type" value="mRNA"/>
</dbReference>
<dbReference type="EMBL" id="AK228479">
    <property type="protein sequence ID" value="BAF00405.1"/>
    <property type="molecule type" value="mRNA"/>
</dbReference>
<dbReference type="PIR" id="F96522">
    <property type="entry name" value="F96522"/>
</dbReference>
<dbReference type="RefSeq" id="NP_001321802.1">
    <property type="nucleotide sequence ID" value="NM_001333320.1"/>
</dbReference>
<dbReference type="RefSeq" id="NP_175261.1">
    <property type="nucleotide sequence ID" value="NM_103724.2"/>
</dbReference>
<dbReference type="SMR" id="O04714"/>
<dbReference type="BioGRID" id="26472">
    <property type="interactions" value="13"/>
</dbReference>
<dbReference type="FunCoup" id="O04714">
    <property type="interactions" value="619"/>
</dbReference>
<dbReference type="IntAct" id="O04714">
    <property type="interactions" value="3"/>
</dbReference>
<dbReference type="STRING" id="3702.O04714"/>
<dbReference type="TCDB" id="9.A.14.5.2">
    <property type="family name" value="the g-protein-coupled receptor (gpcr) family"/>
</dbReference>
<dbReference type="GlyCosmos" id="O04714">
    <property type="glycosylation" value="1 site, No reported glycans"/>
</dbReference>
<dbReference type="GlyGen" id="O04714">
    <property type="glycosylation" value="1 site"/>
</dbReference>
<dbReference type="iPTMnet" id="O04714"/>
<dbReference type="PaxDb" id="3702-AT1G48270.1"/>
<dbReference type="ProteomicsDB" id="222023"/>
<dbReference type="EnsemblPlants" id="AT1G48270.1">
    <property type="protein sequence ID" value="AT1G48270.1"/>
    <property type="gene ID" value="AT1G48270"/>
</dbReference>
<dbReference type="EnsemblPlants" id="AT1G48270.2">
    <property type="protein sequence ID" value="AT1G48270.2"/>
    <property type="gene ID" value="AT1G48270"/>
</dbReference>
<dbReference type="GeneID" id="841247"/>
<dbReference type="Gramene" id="AT1G48270.1">
    <property type="protein sequence ID" value="AT1G48270.1"/>
    <property type="gene ID" value="AT1G48270"/>
</dbReference>
<dbReference type="Gramene" id="AT1G48270.2">
    <property type="protein sequence ID" value="AT1G48270.2"/>
    <property type="gene ID" value="AT1G48270"/>
</dbReference>
<dbReference type="KEGG" id="ath:AT1G48270"/>
<dbReference type="Araport" id="AT1G48270"/>
<dbReference type="TAIR" id="AT1G48270">
    <property type="gene designation" value="GCR1"/>
</dbReference>
<dbReference type="eggNOG" id="ENOG502QUBH">
    <property type="taxonomic scope" value="Eukaryota"/>
</dbReference>
<dbReference type="HOGENOM" id="CLU_077260_0_0_1"/>
<dbReference type="InParanoid" id="O04714"/>
<dbReference type="OMA" id="FYSPDMT"/>
<dbReference type="PhylomeDB" id="O04714"/>
<dbReference type="PRO" id="PR:O04714"/>
<dbReference type="Proteomes" id="UP000006548">
    <property type="component" value="Chromosome 1"/>
</dbReference>
<dbReference type="ExpressionAtlas" id="O04714">
    <property type="expression patterns" value="baseline and differential"/>
</dbReference>
<dbReference type="GO" id="GO:0005794">
    <property type="term" value="C:Golgi apparatus"/>
    <property type="evidence" value="ECO:0007005"/>
    <property type="project" value="TAIR"/>
</dbReference>
<dbReference type="GO" id="GO:0000325">
    <property type="term" value="C:plant-type vacuole"/>
    <property type="evidence" value="ECO:0007005"/>
    <property type="project" value="TAIR"/>
</dbReference>
<dbReference type="GO" id="GO:0005886">
    <property type="term" value="C:plasma membrane"/>
    <property type="evidence" value="ECO:0000314"/>
    <property type="project" value="UniProtKB"/>
</dbReference>
<dbReference type="GO" id="GO:0004930">
    <property type="term" value="F:G protein-coupled receptor activity"/>
    <property type="evidence" value="ECO:0000250"/>
    <property type="project" value="TAIR"/>
</dbReference>
<dbReference type="GO" id="GO:0009738">
    <property type="term" value="P:abscisic acid-activated signaling pathway"/>
    <property type="evidence" value="ECO:0000315"/>
    <property type="project" value="UniProtKB"/>
</dbReference>
<dbReference type="GO" id="GO:0009785">
    <property type="term" value="P:blue light signaling pathway"/>
    <property type="evidence" value="ECO:0000315"/>
    <property type="project" value="UniProtKB"/>
</dbReference>
<dbReference type="GO" id="GO:0009742">
    <property type="term" value="P:brassinosteroid mediated signaling pathway"/>
    <property type="evidence" value="ECO:0000315"/>
    <property type="project" value="UniProtKB"/>
</dbReference>
<dbReference type="GO" id="GO:0009736">
    <property type="term" value="P:cytokinin-activated signaling pathway"/>
    <property type="evidence" value="ECO:0007669"/>
    <property type="project" value="UniProtKB-KW"/>
</dbReference>
<dbReference type="GO" id="GO:0009908">
    <property type="term" value="P:flower development"/>
    <property type="evidence" value="ECO:0000315"/>
    <property type="project" value="TAIR"/>
</dbReference>
<dbReference type="GO" id="GO:0007186">
    <property type="term" value="P:G protein-coupled receptor signaling pathway"/>
    <property type="evidence" value="ECO:0000315"/>
    <property type="project" value="UniProtKB"/>
</dbReference>
<dbReference type="GO" id="GO:0009740">
    <property type="term" value="P:gibberellic acid mediated signaling pathway"/>
    <property type="evidence" value="ECO:0007669"/>
    <property type="project" value="UniProtKB-KW"/>
</dbReference>
<dbReference type="GO" id="GO:0009094">
    <property type="term" value="P:L-phenylalanine biosynthetic process"/>
    <property type="evidence" value="ECO:0000315"/>
    <property type="project" value="TAIR"/>
</dbReference>
<dbReference type="GO" id="GO:0006629">
    <property type="term" value="P:lipid metabolic process"/>
    <property type="evidence" value="ECO:0007669"/>
    <property type="project" value="UniProtKB-KW"/>
</dbReference>
<dbReference type="GO" id="GO:0010231">
    <property type="term" value="P:maintenance of seed dormancy"/>
    <property type="evidence" value="ECO:0000315"/>
    <property type="project" value="TAIR"/>
</dbReference>
<dbReference type="GO" id="GO:0000278">
    <property type="term" value="P:mitotic cell cycle"/>
    <property type="evidence" value="ECO:0000314"/>
    <property type="project" value="TAIR"/>
</dbReference>
<dbReference type="GO" id="GO:0009788">
    <property type="term" value="P:negative regulation of abscisic acid-activated signaling pathway"/>
    <property type="evidence" value="ECO:0000315"/>
    <property type="project" value="UniProtKB"/>
</dbReference>
<dbReference type="GO" id="GO:0009939">
    <property type="term" value="P:positive regulation of gibberellic acid mediated signaling pathway"/>
    <property type="evidence" value="ECO:0000315"/>
    <property type="project" value="UniProtKB"/>
</dbReference>
<dbReference type="GO" id="GO:0009735">
    <property type="term" value="P:response to cytokinin"/>
    <property type="evidence" value="ECO:0000315"/>
    <property type="project" value="TAIR"/>
</dbReference>
<dbReference type="GO" id="GO:0010244">
    <property type="term" value="P:response to low fluence blue light stimulus by blue low-fluence system"/>
    <property type="evidence" value="ECO:0000315"/>
    <property type="project" value="TAIR"/>
</dbReference>
<dbReference type="GO" id="GO:0006571">
    <property type="term" value="P:tyrosine biosynthetic process"/>
    <property type="evidence" value="ECO:0000315"/>
    <property type="project" value="TAIR"/>
</dbReference>
<dbReference type="FunFam" id="1.20.1070.10:FF:000395">
    <property type="entry name" value="G-protein coupled receptor 1"/>
    <property type="match status" value="1"/>
</dbReference>
<dbReference type="Gene3D" id="1.20.1070.10">
    <property type="entry name" value="Rhodopsin 7-helix transmembrane proteins"/>
    <property type="match status" value="1"/>
</dbReference>
<dbReference type="InterPro" id="IPR022343">
    <property type="entry name" value="GCR1-cAMP_receptor"/>
</dbReference>
<dbReference type="InterPro" id="IPR017981">
    <property type="entry name" value="GPCR_2-like_7TM"/>
</dbReference>
<dbReference type="InterPro" id="IPR022340">
    <property type="entry name" value="GPCR_GCR1_put"/>
</dbReference>
<dbReference type="PANTHER" id="PTHR23112">
    <property type="entry name" value="G PROTEIN-COUPLED RECEPTOR 157-RELATED"/>
    <property type="match status" value="1"/>
</dbReference>
<dbReference type="PANTHER" id="PTHR23112:SF0">
    <property type="entry name" value="TRANSMEMBRANE PROTEIN 116"/>
    <property type="match status" value="1"/>
</dbReference>
<dbReference type="Pfam" id="PF05462">
    <property type="entry name" value="Dicty_CAR"/>
    <property type="match status" value="1"/>
</dbReference>
<dbReference type="PRINTS" id="PR02001">
    <property type="entry name" value="GCR1CAMPR"/>
</dbReference>
<dbReference type="PRINTS" id="PR02000">
    <property type="entry name" value="GCR1PLANT"/>
</dbReference>
<dbReference type="SUPFAM" id="SSF81321">
    <property type="entry name" value="Family A G protein-coupled receptor-like"/>
    <property type="match status" value="1"/>
</dbReference>
<dbReference type="PROSITE" id="PS50261">
    <property type="entry name" value="G_PROTEIN_RECEP_F2_4"/>
    <property type="match status" value="1"/>
</dbReference>
<evidence type="ECO:0000250" key="1"/>
<evidence type="ECO:0000255" key="2"/>
<evidence type="ECO:0000269" key="3">
    <source>
    </source>
</evidence>
<evidence type="ECO:0000269" key="4">
    <source>
    </source>
</evidence>
<evidence type="ECO:0000269" key="5">
    <source>
    </source>
</evidence>
<evidence type="ECO:0000269" key="6">
    <source>
    </source>
</evidence>
<evidence type="ECO:0000269" key="7">
    <source>
    </source>
</evidence>
<evidence type="ECO:0000269" key="8">
    <source>
    </source>
</evidence>
<evidence type="ECO:0000269" key="9">
    <source>
    </source>
</evidence>
<evidence type="ECO:0000269" key="10">
    <source ref="7"/>
</evidence>
<evidence type="ECO:0000305" key="11"/>
<evidence type="ECO:0000305" key="12">
    <source>
    </source>
</evidence>
<evidence type="ECO:0000305" key="13">
    <source>
    </source>
</evidence>
<evidence type="ECO:0007744" key="14">
    <source>
    </source>
</evidence>
<reference key="1">
    <citation type="journal article" date="1997" name="Eur. J. Biochem.">
        <title>Cloning of a putative G-protein-coupled receptor from Arabidopsis thaliana.</title>
        <authorList>
            <person name="Josefsson L.G."/>
            <person name="Rask L."/>
        </authorList>
    </citation>
    <scope>NUCLEOTIDE SEQUENCE [MRNA]</scope>
    <source>
        <strain>cv. Columbia</strain>
    </source>
</reference>
<reference key="2">
    <citation type="journal article" date="1998" name="Curr. Biol.">
        <title>A higher plant seven-transmembrane receptor that influences sensitivity to cytokinins.</title>
        <authorList>
            <person name="Plakidou-Dymock S."/>
            <person name="Dymock D."/>
            <person name="Hooley R."/>
        </authorList>
    </citation>
    <scope>NUCLEOTIDE SEQUENCE [GENOMIC DNA / MRNA]</scope>
    <scope>FUNCTION</scope>
    <scope>TISSUE SPECIFICITY</scope>
    <source>
        <strain>cv. Columbia</strain>
    </source>
</reference>
<reference key="3">
    <citation type="journal article" date="2000" name="Nature">
        <title>Sequence and analysis of chromosome 1 of the plant Arabidopsis thaliana.</title>
        <authorList>
            <person name="Theologis A."/>
            <person name="Ecker J.R."/>
            <person name="Palm C.J."/>
            <person name="Federspiel N.A."/>
            <person name="Kaul S."/>
            <person name="White O."/>
            <person name="Alonso J."/>
            <person name="Altafi H."/>
            <person name="Araujo R."/>
            <person name="Bowman C.L."/>
            <person name="Brooks S.Y."/>
            <person name="Buehler E."/>
            <person name="Chan A."/>
            <person name="Chao Q."/>
            <person name="Chen H."/>
            <person name="Cheuk R.F."/>
            <person name="Chin C.W."/>
            <person name="Chung M.K."/>
            <person name="Conn L."/>
            <person name="Conway A.B."/>
            <person name="Conway A.R."/>
            <person name="Creasy T.H."/>
            <person name="Dewar K."/>
            <person name="Dunn P."/>
            <person name="Etgu P."/>
            <person name="Feldblyum T.V."/>
            <person name="Feng J.-D."/>
            <person name="Fong B."/>
            <person name="Fujii C.Y."/>
            <person name="Gill J.E."/>
            <person name="Goldsmith A.D."/>
            <person name="Haas B."/>
            <person name="Hansen N.F."/>
            <person name="Hughes B."/>
            <person name="Huizar L."/>
            <person name="Hunter J.L."/>
            <person name="Jenkins J."/>
            <person name="Johnson-Hopson C."/>
            <person name="Khan S."/>
            <person name="Khaykin E."/>
            <person name="Kim C.J."/>
            <person name="Koo H.L."/>
            <person name="Kremenetskaia I."/>
            <person name="Kurtz D.B."/>
            <person name="Kwan A."/>
            <person name="Lam B."/>
            <person name="Langin-Hooper S."/>
            <person name="Lee A."/>
            <person name="Lee J.M."/>
            <person name="Lenz C.A."/>
            <person name="Li J.H."/>
            <person name="Li Y.-P."/>
            <person name="Lin X."/>
            <person name="Liu S.X."/>
            <person name="Liu Z.A."/>
            <person name="Luros J.S."/>
            <person name="Maiti R."/>
            <person name="Marziali A."/>
            <person name="Militscher J."/>
            <person name="Miranda M."/>
            <person name="Nguyen M."/>
            <person name="Nierman W.C."/>
            <person name="Osborne B.I."/>
            <person name="Pai G."/>
            <person name="Peterson J."/>
            <person name="Pham P.K."/>
            <person name="Rizzo M."/>
            <person name="Rooney T."/>
            <person name="Rowley D."/>
            <person name="Sakano H."/>
            <person name="Salzberg S.L."/>
            <person name="Schwartz J.R."/>
            <person name="Shinn P."/>
            <person name="Southwick A.M."/>
            <person name="Sun H."/>
            <person name="Tallon L.J."/>
            <person name="Tambunga G."/>
            <person name="Toriumi M.J."/>
            <person name="Town C.D."/>
            <person name="Utterback T."/>
            <person name="Van Aken S."/>
            <person name="Vaysberg M."/>
            <person name="Vysotskaia V.S."/>
            <person name="Walker M."/>
            <person name="Wu D."/>
            <person name="Yu G."/>
            <person name="Fraser C.M."/>
            <person name="Venter J.C."/>
            <person name="Davis R.W."/>
        </authorList>
    </citation>
    <scope>NUCLEOTIDE SEQUENCE [LARGE SCALE GENOMIC DNA]</scope>
    <source>
        <strain>cv. Columbia</strain>
    </source>
</reference>
<reference key="4">
    <citation type="journal article" date="2017" name="Plant J.">
        <title>Araport11: a complete reannotation of the Arabidopsis thaliana reference genome.</title>
        <authorList>
            <person name="Cheng C.Y."/>
            <person name="Krishnakumar V."/>
            <person name="Chan A.P."/>
            <person name="Thibaud-Nissen F."/>
            <person name="Schobel S."/>
            <person name="Town C.D."/>
        </authorList>
    </citation>
    <scope>GENOME REANNOTATION</scope>
    <source>
        <strain>cv. Columbia</strain>
    </source>
</reference>
<reference key="5">
    <citation type="journal article" date="2003" name="Science">
        <title>Empirical analysis of transcriptional activity in the Arabidopsis genome.</title>
        <authorList>
            <person name="Yamada K."/>
            <person name="Lim J."/>
            <person name="Dale J.M."/>
            <person name="Chen H."/>
            <person name="Shinn P."/>
            <person name="Palm C.J."/>
            <person name="Southwick A.M."/>
            <person name="Wu H.C."/>
            <person name="Kim C.J."/>
            <person name="Nguyen M."/>
            <person name="Pham P.K."/>
            <person name="Cheuk R.F."/>
            <person name="Karlin-Newmann G."/>
            <person name="Liu S.X."/>
            <person name="Lam B."/>
            <person name="Sakano H."/>
            <person name="Wu T."/>
            <person name="Yu G."/>
            <person name="Miranda M."/>
            <person name="Quach H.L."/>
            <person name="Tripp M."/>
            <person name="Chang C.H."/>
            <person name="Lee J.M."/>
            <person name="Toriumi M.J."/>
            <person name="Chan M.M."/>
            <person name="Tang C.C."/>
            <person name="Onodera C.S."/>
            <person name="Deng J.M."/>
            <person name="Akiyama K."/>
            <person name="Ansari Y."/>
            <person name="Arakawa T."/>
            <person name="Banh J."/>
            <person name="Banno F."/>
            <person name="Bowser L."/>
            <person name="Brooks S.Y."/>
            <person name="Carninci P."/>
            <person name="Chao Q."/>
            <person name="Choy N."/>
            <person name="Enju A."/>
            <person name="Goldsmith A.D."/>
            <person name="Gurjal M."/>
            <person name="Hansen N.F."/>
            <person name="Hayashizaki Y."/>
            <person name="Johnson-Hopson C."/>
            <person name="Hsuan V.W."/>
            <person name="Iida K."/>
            <person name="Karnes M."/>
            <person name="Khan S."/>
            <person name="Koesema E."/>
            <person name="Ishida J."/>
            <person name="Jiang P.X."/>
            <person name="Jones T."/>
            <person name="Kawai J."/>
            <person name="Kamiya A."/>
            <person name="Meyers C."/>
            <person name="Nakajima M."/>
            <person name="Narusaka M."/>
            <person name="Seki M."/>
            <person name="Sakurai T."/>
            <person name="Satou M."/>
            <person name="Tamse R."/>
            <person name="Vaysberg M."/>
            <person name="Wallender E.K."/>
            <person name="Wong C."/>
            <person name="Yamamura Y."/>
            <person name="Yuan S."/>
            <person name="Shinozaki K."/>
            <person name="Davis R.W."/>
            <person name="Theologis A."/>
            <person name="Ecker J.R."/>
        </authorList>
    </citation>
    <scope>NUCLEOTIDE SEQUENCE [LARGE SCALE MRNA]</scope>
    <source>
        <strain>cv. Columbia</strain>
    </source>
</reference>
<reference key="6">
    <citation type="submission" date="2006-07" db="EMBL/GenBank/DDBJ databases">
        <title>Large-scale analysis of RIKEN Arabidopsis full-length (RAFL) cDNAs.</title>
        <authorList>
            <person name="Totoki Y."/>
            <person name="Seki M."/>
            <person name="Ishida J."/>
            <person name="Nakajima M."/>
            <person name="Enju A."/>
            <person name="Kamiya A."/>
            <person name="Narusaka M."/>
            <person name="Shin-i T."/>
            <person name="Nakagawa M."/>
            <person name="Sakamoto N."/>
            <person name="Oishi K."/>
            <person name="Kohara Y."/>
            <person name="Kobayashi M."/>
            <person name="Toyoda A."/>
            <person name="Sakaki Y."/>
            <person name="Sakurai T."/>
            <person name="Iida K."/>
            <person name="Akiyama K."/>
            <person name="Satou M."/>
            <person name="Toyoda T."/>
            <person name="Konagaya A."/>
            <person name="Carninci P."/>
            <person name="Kawai J."/>
            <person name="Hayashizaki Y."/>
            <person name="Shinozaki K."/>
        </authorList>
    </citation>
    <scope>NUCLEOTIDE SEQUENCE [LARGE SCALE MRNA]</scope>
    <source>
        <strain>cv. Columbia</strain>
    </source>
</reference>
<reference key="7">
    <citation type="journal article" date="2001" name="J. Plant Physiol.">
        <title>Re-evaluation of the cytokinin receptor role of the Arabidopsis gene GCR1.</title>
        <authorList>
            <person name="Humphrey T.V."/>
            <person name="Botella J.R."/>
        </authorList>
    </citation>
    <scope>SUBCELLULAR LOCATION</scope>
    <source>
        <strain>cv. Landsberg erecta</strain>
    </source>
</reference>
<reference key="8">
    <citation type="journal article" date="2002" name="Proc. Natl. Acad. Sci. U.S.A.">
        <title>GCR1, the putative Arabidopsis G protein-coupled receptor gene is cell cycle-regulated, and its overexpression abolishes seed dormancy and shortens time to flowering.</title>
        <authorList>
            <person name="Colucci G."/>
            <person name="Apone F."/>
            <person name="Alyeshmerni N."/>
            <person name="Chalmers D."/>
            <person name="Chrispeels M.J."/>
        </authorList>
    </citation>
    <scope>FUNCTION</scope>
    <scope>INDUCTION DURING THE CELL CYCLE</scope>
    <scope>TISSUE SPECIFICITY</scope>
    <scope>DEVELOPMENTAL STAGE</scope>
    <source>
        <strain>cv. Columbia</strain>
    </source>
</reference>
<reference key="9">
    <citation type="journal article" date="2003" name="Plant Physiol.">
        <title>The G-protein-coupled receptor GCR1 regulates DNA synthesis through activation of phosphatidylinositol-specific phospholipase C.</title>
        <authorList>
            <person name="Apone F."/>
            <person name="Alyeshmerni N."/>
            <person name="Wiens K."/>
            <person name="Chalmers D."/>
            <person name="Chrispeels M.J."/>
            <person name="Colucci G."/>
        </authorList>
    </citation>
    <scope>FUNCTION</scope>
</reference>
<reference key="10">
    <citation type="journal article" date="2004" name="Plant Cell">
        <title>The Arabidopsis putative G protein-coupled receptor GCR1 interacts with the G protein alpha subunit GPA1 and regulates abscisic acid signaling.</title>
        <authorList>
            <person name="Pandey S."/>
            <person name="Assmann S.M."/>
        </authorList>
    </citation>
    <scope>FUNCTION</scope>
    <scope>DISRUPTION PHENOTYPE</scope>
    <scope>INTERACTION WITH GPA1</scope>
    <source>
        <strain>cv. Columbia</strain>
        <strain>cv. Wassilewskija</strain>
    </source>
</reference>
<reference key="11">
    <citation type="journal article" date="2004" name="Plant Physiol.">
        <title>GCR1 can act independently of heterotrimeric G-protein in response to brassinosteroids and gibberellins in Arabidopsis seed germination.</title>
        <authorList>
            <person name="Chen J.-G."/>
            <person name="Pandey S."/>
            <person name="Huang J."/>
            <person name="Alonso J.M."/>
            <person name="Ecker J.R."/>
            <person name="Assmann S.M."/>
            <person name="Jones A.M."/>
        </authorList>
    </citation>
    <scope>FUNCTION</scope>
    <scope>DISRUPTION PHENOTYPE</scope>
    <scope>SUBCELLULAR LOCATION</scope>
    <scope>TISSUE SPECIFICITY</scope>
    <source>
        <strain>cv. Columbia</strain>
    </source>
</reference>
<reference key="12">
    <citation type="journal article" date="2006" name="Plant Physiol.">
        <title>G-protein-coupled receptor 1, G-protein Galpha-subunit 1, and prephenate dehydratase 1 are required for blue light-induced production of phenylalanine in etiolated Arabidopsis.</title>
        <authorList>
            <person name="Warpeha K.M."/>
            <person name="Lateef S.S."/>
            <person name="Lapik Y."/>
            <person name="Anderson M."/>
            <person name="Lee B.-S."/>
            <person name="Kaufman L.S."/>
        </authorList>
    </citation>
    <scope>FUNCTION</scope>
    <scope>DISRUPTION PHENOTYPE</scope>
</reference>
<reference key="13">
    <citation type="journal article" date="2006" name="Plant Physiol.">
        <title>G-protein complex mutants are hypersensitive to abscisic acid regulation of germination and postgermination development.</title>
        <authorList>
            <person name="Pandey S."/>
            <person name="Chen J.-G."/>
            <person name="Jones A.M."/>
            <person name="Assmann S.M."/>
        </authorList>
    </citation>
    <scope>RETRACTED PAPER</scope>
    <source>
        <strain>cv. Columbia</strain>
    </source>
</reference>
<reference key="14">
    <citation type="journal article" date="2019" name="Plant Physiol.">
        <authorList>
            <person name="Pandey S."/>
            <person name="Chen J.-G."/>
            <person name="Jones A.M."/>
            <person name="Assmann S.M."/>
        </authorList>
    </citation>
    <scope>RETRACTION NOTICE OF PUBMED:16581874</scope>
</reference>
<reference key="15">
    <citation type="journal article" date="2007" name="Plant Physiol.">
        <title>The GCR1, GPA1, PRN1, NF-Y signal chain mediates both blue light and abscisic acid responses in Arabidopsis.</title>
        <authorList>
            <person name="Warpeha K.M."/>
            <person name="Upadhyay S."/>
            <person name="Yeh J."/>
            <person name="Adamiak J."/>
            <person name="Hawkins S.I."/>
            <person name="Lapik Y.R."/>
            <person name="Anderson M.B."/>
            <person name="Kaufman L.S."/>
        </authorList>
    </citation>
    <scope>FUNCTION</scope>
    <scope>DISRUPTION PHENOTYPE</scope>
    <source>
        <strain>cv. Columbia</strain>
        <strain>cv. Wassilewskija</strain>
    </source>
</reference>
<reference key="16">
    <citation type="journal article" date="2012" name="Mol. Cell. Proteomics">
        <title>Comparative large-scale characterisation of plant vs. mammal proteins reveals similar and idiosyncratic N-alpha acetylation features.</title>
        <authorList>
            <person name="Bienvenut W.V."/>
            <person name="Sumpton D."/>
            <person name="Martinez A."/>
            <person name="Lilla S."/>
            <person name="Espagne C."/>
            <person name="Meinnel T."/>
            <person name="Giglione C."/>
        </authorList>
    </citation>
    <scope>ACETYLATION [LARGE SCALE ANALYSIS] AT SER-2</scope>
    <scope>CLEAVAGE OF INITIATOR METHIONINE [LARGE SCALE ANALYSIS]</scope>
    <scope>IDENTIFICATION BY MASS SPECTROMETRY [LARGE SCALE ANALYSIS]</scope>
</reference>
<comment type="function">
    <text evidence="3 4 5 6 7 8 9">Together with GPA1, may regulate the cell cycle via a signaling cascade that uses phosphatidylinositol-specific phospholipase C (PI-PLC) as an effector and inositol 1,4,5-trisphosphate(IP(3)) as a second messenger. Promotes PI-PLC activity and IP(3) accumulation. Involved in the blue light (BL) signaling. Together with GPA1 and ADT3, required for BL-mediated synthesis of phenylpyruvate and subsequently of phenylalanine (Phe), in etiolated seedlings. Probably involved in cytokinin signal transduction. Plays a positive role in gibberellin- (GA) and brassinosteroid- (BR) regulated seed germination, probably independently of a heterotrimeric G-protein. Mediates seed dormancy abolition, and promotes seed germination and flowering.</text>
</comment>
<comment type="subunit">
    <text evidence="5">Interacts with GPA1.</text>
</comment>
<comment type="interaction">
    <interactant intactId="EBI-443899">
        <id>O04714</id>
    </interactant>
    <interactant intactId="EBI-443890">
        <id>P18064</id>
        <label>GPA1</label>
    </interactant>
    <organismsDiffer>false</organismsDiffer>
    <experiments>6</experiments>
</comment>
<comment type="subcellular location">
    <subcellularLocation>
        <location evidence="6 10">Cell membrane</location>
        <topology evidence="6 10">Multi-pass membrane protein</topology>
    </subcellularLocation>
    <text>Localized to the outer edge of the leaf epidermal cells in a punctuate pattern.</text>
</comment>
<comment type="tissue specificity">
    <text evidence="3 6 9">Mostly present in the meristematic regions. Expressed at low levels in seedlings, vascular tissues of cotyledons, hypocotyl, and roots, stems, leaves, flowering buds and siliques. In dark-grown seedlings, localized in the cotyledons and the hook.</text>
</comment>
<comment type="developmental stage">
    <text evidence="3">In seedlings, mostly expressed in small roots, and to a lower extent in hypocotyls. In young plants, equaly expressed in leaves, roots, and shoot tip. In old plants, present in roots, flower buds and young siliques, but not in leaves.</text>
</comment>
<comment type="induction">
    <text evidence="3">Modulated during the cell cycle with a peak during the early G(1) phase.</text>
</comment>
<comment type="disruption phenotype">
    <text evidence="5 6 7 8">Improved drought tolerance accompanied by lower rates of water loss. Impaired sensitivity to gibberellin (GA) and brassinosteroid (BR) in seed germination. Hypersensitivity to ABA and glucose (Glc) during and after seed germination. Altered response to blue light (BL).</text>
</comment>
<comment type="similarity">
    <text evidence="11">Belongs to the G-protein coupled receptor 2 family.</text>
</comment>
<comment type="caution">
    <text evidence="12 13">An article reported a role as negative regulator of ABA during seed germination; however, this paper was later retracted.</text>
</comment>
<accession>O04714</accession>
<accession>O04214</accession>
<accession>Q8LPG0</accession>
<name>GCR1_ARATH</name>
<gene>
    <name type="primary">GCR1</name>
    <name type="ordered locus">At1g48270</name>
    <name type="ORF">F11A17.17</name>
</gene>
<organism>
    <name type="scientific">Arabidopsis thaliana</name>
    <name type="common">Mouse-ear cress</name>
    <dbReference type="NCBI Taxonomy" id="3702"/>
    <lineage>
        <taxon>Eukaryota</taxon>
        <taxon>Viridiplantae</taxon>
        <taxon>Streptophyta</taxon>
        <taxon>Embryophyta</taxon>
        <taxon>Tracheophyta</taxon>
        <taxon>Spermatophyta</taxon>
        <taxon>Magnoliopsida</taxon>
        <taxon>eudicotyledons</taxon>
        <taxon>Gunneridae</taxon>
        <taxon>Pentapetalae</taxon>
        <taxon>rosids</taxon>
        <taxon>malvids</taxon>
        <taxon>Brassicales</taxon>
        <taxon>Brassicaceae</taxon>
        <taxon>Camelineae</taxon>
        <taxon>Arabidopsis</taxon>
    </lineage>
</organism>
<keyword id="KW-0938">Abscisic acid signaling pathway</keyword>
<keyword id="KW-0007">Acetylation</keyword>
<keyword id="KW-1070">Brassinosteroid signaling pathway</keyword>
<keyword id="KW-0131">Cell cycle</keyword>
<keyword id="KW-1003">Cell membrane</keyword>
<keyword id="KW-0932">Cytokinin signaling pathway</keyword>
<keyword id="KW-1015">Disulfide bond</keyword>
<keyword id="KW-0297">G-protein coupled receptor</keyword>
<keyword id="KW-0939">Gibberellin signaling pathway</keyword>
<keyword id="KW-0325">Glycoprotein</keyword>
<keyword id="KW-0443">Lipid metabolism</keyword>
<keyword id="KW-0472">Membrane</keyword>
<keyword id="KW-0675">Receptor</keyword>
<keyword id="KW-1185">Reference proteome</keyword>
<keyword id="KW-0807">Transducer</keyword>
<keyword id="KW-0812">Transmembrane</keyword>
<keyword id="KW-1133">Transmembrane helix</keyword>
<sequence>MSAVLTAGGGLTAGDRSIITAINTGASSLSFVGSAFIVLCYCLFKELRKFSFKLVFYLALSDMLCSFFLIVGDPSKGFICYAQGYTTHFFCVASFLWTTTIAFTLHRTVVKHKTDVEDLEAMFHLYVWGTSLVVTVIRSFGNNHSHLGPWCWTQTGLKGKAVHFLTFYAPLWGAILYNGFTYFQVIRMLRNARRMAVGMSDRVDQFDNRAELKVLNRWGYYPLILIGSWAFGTINRIHDFIEPGHKIFWLSVLDVGTAALMGLFNSIAYGFNSSVRRAIHERLELFLPERLYRWLPSNFRPKNHLILHQQQQQRSEMVSLKTEDQQ</sequence>
<feature type="initiator methionine" description="Removed" evidence="14">
    <location>
        <position position="1"/>
    </location>
</feature>
<feature type="chain" id="PRO_0000412191" description="G-protein coupled receptor 1">
    <location>
        <begin position="2"/>
        <end position="326"/>
    </location>
</feature>
<feature type="topological domain" description="Extracellular" evidence="2">
    <location>
        <begin position="2"/>
        <end position="23"/>
    </location>
</feature>
<feature type="transmembrane region" description="Helical; Name=1" evidence="2">
    <location>
        <begin position="24"/>
        <end position="44"/>
    </location>
</feature>
<feature type="topological domain" description="Cytoplasmic" evidence="2">
    <location>
        <begin position="45"/>
        <end position="51"/>
    </location>
</feature>
<feature type="transmembrane region" description="Helical; Name=2" evidence="2">
    <location>
        <begin position="52"/>
        <end position="72"/>
    </location>
</feature>
<feature type="topological domain" description="Extracellular" evidence="2">
    <location>
        <begin position="73"/>
        <end position="84"/>
    </location>
</feature>
<feature type="transmembrane region" description="Helical; Name=3" evidence="2">
    <location>
        <begin position="85"/>
        <end position="105"/>
    </location>
</feature>
<feature type="topological domain" description="Cytoplasmic" evidence="2">
    <location>
        <begin position="106"/>
        <end position="120"/>
    </location>
</feature>
<feature type="transmembrane region" description="Helical; Name=4" evidence="2">
    <location>
        <begin position="121"/>
        <end position="141"/>
    </location>
</feature>
<feature type="topological domain" description="Extracellular" evidence="2">
    <location>
        <begin position="142"/>
        <end position="160"/>
    </location>
</feature>
<feature type="transmembrane region" description="Helical; Name=5" evidence="2">
    <location>
        <begin position="161"/>
        <end position="181"/>
    </location>
</feature>
<feature type="topological domain" description="Cytoplasmic" evidence="2">
    <location>
        <begin position="182"/>
        <end position="213"/>
    </location>
</feature>
<feature type="transmembrane region" description="Helical; Name=6" evidence="2">
    <location>
        <begin position="214"/>
        <end position="234"/>
    </location>
</feature>
<feature type="topological domain" description="Extracellular" evidence="2">
    <location>
        <begin position="235"/>
        <end position="246"/>
    </location>
</feature>
<feature type="transmembrane region" description="Helical; Name=7" evidence="2">
    <location>
        <begin position="247"/>
        <end position="267"/>
    </location>
</feature>
<feature type="topological domain" description="Cytoplasmic" evidence="2">
    <location>
        <begin position="268"/>
        <end position="326"/>
    </location>
</feature>
<feature type="modified residue" description="N-acetylserine" evidence="14">
    <location>
        <position position="2"/>
    </location>
</feature>
<feature type="glycosylation site" description="N-linked (GlcNAc...) asparagine" evidence="2">
    <location>
        <position position="143"/>
    </location>
</feature>
<feature type="disulfide bond" evidence="1">
    <location>
        <begin position="80"/>
        <end position="151"/>
    </location>
</feature>
<feature type="sequence conflict" description="In Ref. 5; AAM20722/AAN15633." evidence="11" ref="5">
    <original>M</original>
    <variation>V</variation>
    <location>
        <position position="63"/>
    </location>
</feature>
<feature type="sequence conflict" description="In Ref. 1; CAA72145." evidence="11" ref="1">
    <original>L</original>
    <variation>F</variation>
    <location>
        <position position="96"/>
    </location>
</feature>
<proteinExistence type="evidence at protein level"/>